<accession>B7NRG6</accession>
<reference key="1">
    <citation type="journal article" date="2009" name="PLoS Genet.">
        <title>Organised genome dynamics in the Escherichia coli species results in highly diverse adaptive paths.</title>
        <authorList>
            <person name="Touchon M."/>
            <person name="Hoede C."/>
            <person name="Tenaillon O."/>
            <person name="Barbe V."/>
            <person name="Baeriswyl S."/>
            <person name="Bidet P."/>
            <person name="Bingen E."/>
            <person name="Bonacorsi S."/>
            <person name="Bouchier C."/>
            <person name="Bouvet O."/>
            <person name="Calteau A."/>
            <person name="Chiapello H."/>
            <person name="Clermont O."/>
            <person name="Cruveiller S."/>
            <person name="Danchin A."/>
            <person name="Diard M."/>
            <person name="Dossat C."/>
            <person name="Karoui M.E."/>
            <person name="Frapy E."/>
            <person name="Garry L."/>
            <person name="Ghigo J.M."/>
            <person name="Gilles A.M."/>
            <person name="Johnson J."/>
            <person name="Le Bouguenec C."/>
            <person name="Lescat M."/>
            <person name="Mangenot S."/>
            <person name="Martinez-Jehanne V."/>
            <person name="Matic I."/>
            <person name="Nassif X."/>
            <person name="Oztas S."/>
            <person name="Petit M.A."/>
            <person name="Pichon C."/>
            <person name="Rouy Z."/>
            <person name="Ruf C.S."/>
            <person name="Schneider D."/>
            <person name="Tourret J."/>
            <person name="Vacherie B."/>
            <person name="Vallenet D."/>
            <person name="Medigue C."/>
            <person name="Rocha E.P.C."/>
            <person name="Denamur E."/>
        </authorList>
    </citation>
    <scope>NUCLEOTIDE SEQUENCE [LARGE SCALE GENOMIC DNA]</scope>
    <source>
        <strain>IAI39 / ExPEC</strain>
    </source>
</reference>
<name>RODZ_ECO7I</name>
<gene>
    <name evidence="1" type="primary">rodZ</name>
    <name type="ordered locus">ECIAI39_2717</name>
</gene>
<comment type="function">
    <text evidence="1">Cytoskeletal protein that is involved in cell-shape control through regulation of the length of the long axis.</text>
</comment>
<comment type="subcellular location">
    <subcellularLocation>
        <location evidence="1">Cell inner membrane</location>
        <topology evidence="1">Single-pass type II membrane protein</topology>
    </subcellularLocation>
    <text evidence="1">Forms helical filaments along the long axis of the cell.</text>
</comment>
<comment type="domain">
    <text evidence="1">The helix-turn-helix (HTH) motif in the cytoplasmic domain of the N-terminus is involved in the formation of spirals to maintain the rigid rod shape. As this protein is anchored in the cytoplasmic membrane, the HTH motif may contribute to protein-protein interactions to form the RodZ helix, which is localized beneath the cytoplasmic membrane. The C-terminal domain may be critical for determination of the rod shape by probably interacting with enzymes required for synthesis of the peptidoglycan layer, including PBPs in the periplasm.</text>
</comment>
<comment type="similarity">
    <text evidence="1">Belongs to the RodZ family.</text>
</comment>
<sequence>MNTEATHDQNEALTTGARLRNAREQLGLSQQAVAERLCLKVSTVRDIEEDKAPADLASTFLRGYIRSYARLVHIPEEELLPGLEKQAPLRAAKVAPMQSFSLGKRRKKRDGWLMTFTWLVLFVVIGLSGAWWWQDHKAQQEEITTMADQSSAELNNNQSQSVPLDTSTTTDQAMATTPTSPVDTTATNTQTPAATTAPSPTVDSQQNAVVPPSQANVDTAATPAPAATTTPDGAAPLPTDQAGVTTPAVDPNALVMNFTADCWLEVTDATGKKLFSGMQRKDGNLNLTGQAPYKLKIGAPAAVQIQYQGKPVDLSRFIRTNQVARLTLNAEQSPAQ</sequence>
<protein>
    <recommendedName>
        <fullName evidence="1">Cytoskeleton protein RodZ</fullName>
    </recommendedName>
</protein>
<feature type="chain" id="PRO_1000189539" description="Cytoskeleton protein RodZ">
    <location>
        <begin position="1"/>
        <end position="336"/>
    </location>
</feature>
<feature type="topological domain" description="Cytoplasmic" evidence="1">
    <location>
        <begin position="1"/>
        <end position="111"/>
    </location>
</feature>
<feature type="transmembrane region" description="Helical; Signal-anchor for type II membrane protein" evidence="1">
    <location>
        <begin position="112"/>
        <end position="132"/>
    </location>
</feature>
<feature type="topological domain" description="Periplasmic" evidence="1">
    <location>
        <begin position="133"/>
        <end position="336"/>
    </location>
</feature>
<feature type="domain" description="HTH cro/C1-type" evidence="1">
    <location>
        <begin position="19"/>
        <end position="71"/>
    </location>
</feature>
<feature type="DNA-binding region" description="H-T-H motif" evidence="1">
    <location>
        <begin position="30"/>
        <end position="49"/>
    </location>
</feature>
<feature type="region of interest" description="Disordered" evidence="2">
    <location>
        <begin position="148"/>
        <end position="245"/>
    </location>
</feature>
<feature type="compositionally biased region" description="Polar residues" evidence="2">
    <location>
        <begin position="148"/>
        <end position="164"/>
    </location>
</feature>
<feature type="compositionally biased region" description="Low complexity" evidence="2">
    <location>
        <begin position="165"/>
        <end position="201"/>
    </location>
</feature>
<feature type="compositionally biased region" description="Polar residues" evidence="2">
    <location>
        <begin position="202"/>
        <end position="217"/>
    </location>
</feature>
<feature type="compositionally biased region" description="Low complexity" evidence="2">
    <location>
        <begin position="218"/>
        <end position="240"/>
    </location>
</feature>
<keyword id="KW-0997">Cell inner membrane</keyword>
<keyword id="KW-1003">Cell membrane</keyword>
<keyword id="KW-0133">Cell shape</keyword>
<keyword id="KW-0238">DNA-binding</keyword>
<keyword id="KW-0472">Membrane</keyword>
<keyword id="KW-0735">Signal-anchor</keyword>
<keyword id="KW-0812">Transmembrane</keyword>
<keyword id="KW-1133">Transmembrane helix</keyword>
<organism>
    <name type="scientific">Escherichia coli O7:K1 (strain IAI39 / ExPEC)</name>
    <dbReference type="NCBI Taxonomy" id="585057"/>
    <lineage>
        <taxon>Bacteria</taxon>
        <taxon>Pseudomonadati</taxon>
        <taxon>Pseudomonadota</taxon>
        <taxon>Gammaproteobacteria</taxon>
        <taxon>Enterobacterales</taxon>
        <taxon>Enterobacteriaceae</taxon>
        <taxon>Escherichia</taxon>
    </lineage>
</organism>
<proteinExistence type="inferred from homology"/>
<dbReference type="EMBL" id="CU928164">
    <property type="protein sequence ID" value="CAR18840.1"/>
    <property type="molecule type" value="Genomic_DNA"/>
</dbReference>
<dbReference type="RefSeq" id="WP_001090832.1">
    <property type="nucleotide sequence ID" value="NC_011750.1"/>
</dbReference>
<dbReference type="RefSeq" id="YP_002408655.1">
    <property type="nucleotide sequence ID" value="NC_011750.1"/>
</dbReference>
<dbReference type="SMR" id="B7NRG6"/>
<dbReference type="STRING" id="585057.ECIAI39_2717"/>
<dbReference type="KEGG" id="ect:ECIAI39_2717"/>
<dbReference type="PATRIC" id="fig|585057.6.peg.2825"/>
<dbReference type="HOGENOM" id="CLU_047530_3_1_6"/>
<dbReference type="Proteomes" id="UP000000749">
    <property type="component" value="Chromosome"/>
</dbReference>
<dbReference type="GO" id="GO:0005886">
    <property type="term" value="C:plasma membrane"/>
    <property type="evidence" value="ECO:0007669"/>
    <property type="project" value="UniProtKB-SubCell"/>
</dbReference>
<dbReference type="GO" id="GO:0003677">
    <property type="term" value="F:DNA binding"/>
    <property type="evidence" value="ECO:0007669"/>
    <property type="project" value="UniProtKB-KW"/>
</dbReference>
<dbReference type="GO" id="GO:0008360">
    <property type="term" value="P:regulation of cell shape"/>
    <property type="evidence" value="ECO:0007669"/>
    <property type="project" value="UniProtKB-UniRule"/>
</dbReference>
<dbReference type="CDD" id="cd00093">
    <property type="entry name" value="HTH_XRE"/>
    <property type="match status" value="1"/>
</dbReference>
<dbReference type="FunFam" id="1.10.260.40:FF:000014">
    <property type="entry name" value="Cytoskeleton protein RodZ"/>
    <property type="match status" value="1"/>
</dbReference>
<dbReference type="Gene3D" id="1.10.260.40">
    <property type="entry name" value="lambda repressor-like DNA-binding domains"/>
    <property type="match status" value="1"/>
</dbReference>
<dbReference type="HAMAP" id="MF_02017">
    <property type="entry name" value="RodZ"/>
    <property type="match status" value="1"/>
</dbReference>
<dbReference type="InterPro" id="IPR050400">
    <property type="entry name" value="Bact_Cytoskel_RodZ"/>
</dbReference>
<dbReference type="InterPro" id="IPR001387">
    <property type="entry name" value="Cro/C1-type_HTH"/>
</dbReference>
<dbReference type="InterPro" id="IPR010982">
    <property type="entry name" value="Lambda_DNA-bd_dom_sf"/>
</dbReference>
<dbReference type="InterPro" id="IPR023690">
    <property type="entry name" value="RodZ"/>
</dbReference>
<dbReference type="InterPro" id="IPR025194">
    <property type="entry name" value="RodZ-like_C"/>
</dbReference>
<dbReference type="NCBIfam" id="NF008109">
    <property type="entry name" value="PRK10856.1"/>
    <property type="match status" value="1"/>
</dbReference>
<dbReference type="PANTHER" id="PTHR34475">
    <property type="match status" value="1"/>
</dbReference>
<dbReference type="PANTHER" id="PTHR34475:SF1">
    <property type="entry name" value="CYTOSKELETON PROTEIN RODZ"/>
    <property type="match status" value="1"/>
</dbReference>
<dbReference type="Pfam" id="PF13413">
    <property type="entry name" value="HTH_25"/>
    <property type="match status" value="1"/>
</dbReference>
<dbReference type="Pfam" id="PF13464">
    <property type="entry name" value="RodZ_C"/>
    <property type="match status" value="1"/>
</dbReference>
<dbReference type="SMART" id="SM00530">
    <property type="entry name" value="HTH_XRE"/>
    <property type="match status" value="1"/>
</dbReference>
<dbReference type="SUPFAM" id="SSF47413">
    <property type="entry name" value="lambda repressor-like DNA-binding domains"/>
    <property type="match status" value="1"/>
</dbReference>
<dbReference type="PROSITE" id="PS50943">
    <property type="entry name" value="HTH_CROC1"/>
    <property type="match status" value="1"/>
</dbReference>
<evidence type="ECO:0000255" key="1">
    <source>
        <dbReference type="HAMAP-Rule" id="MF_02017"/>
    </source>
</evidence>
<evidence type="ECO:0000256" key="2">
    <source>
        <dbReference type="SAM" id="MobiDB-lite"/>
    </source>
</evidence>